<feature type="chain" id="PRO_0000366997" description="Beta-galactosidase">
    <location>
        <begin position="1"/>
        <end position="1024"/>
    </location>
</feature>
<feature type="active site" description="Proton donor" evidence="1">
    <location>
        <position position="462"/>
    </location>
</feature>
<feature type="active site" description="Nucleophile" evidence="1">
    <location>
        <position position="538"/>
    </location>
</feature>
<feature type="binding site" evidence="1">
    <location>
        <position position="103"/>
    </location>
    <ligand>
        <name>substrate</name>
    </ligand>
</feature>
<feature type="binding site" evidence="1">
    <location>
        <position position="202"/>
    </location>
    <ligand>
        <name>Na(+)</name>
        <dbReference type="ChEBI" id="CHEBI:29101"/>
    </ligand>
</feature>
<feature type="binding site" evidence="1">
    <location>
        <position position="202"/>
    </location>
    <ligand>
        <name>substrate</name>
    </ligand>
</feature>
<feature type="binding site" evidence="1">
    <location>
        <position position="417"/>
    </location>
    <ligand>
        <name>Mg(2+)</name>
        <dbReference type="ChEBI" id="CHEBI:18420"/>
        <label>1</label>
    </ligand>
</feature>
<feature type="binding site" evidence="1">
    <location>
        <position position="419"/>
    </location>
    <ligand>
        <name>Mg(2+)</name>
        <dbReference type="ChEBI" id="CHEBI:18420"/>
        <label>1</label>
    </ligand>
</feature>
<feature type="binding site" evidence="1">
    <location>
        <position position="462"/>
    </location>
    <ligand>
        <name>Mg(2+)</name>
        <dbReference type="ChEBI" id="CHEBI:18420"/>
        <label>1</label>
    </ligand>
</feature>
<feature type="binding site" evidence="1">
    <location>
        <position position="462"/>
    </location>
    <ligand>
        <name>substrate</name>
    </ligand>
</feature>
<feature type="binding site" evidence="1">
    <location>
        <begin position="538"/>
        <end position="541"/>
    </location>
    <ligand>
        <name>substrate</name>
    </ligand>
</feature>
<feature type="binding site" evidence="1">
    <location>
        <position position="598"/>
    </location>
    <ligand>
        <name>Mg(2+)</name>
        <dbReference type="ChEBI" id="CHEBI:18420"/>
        <label>2</label>
    </ligand>
</feature>
<feature type="binding site" evidence="1">
    <location>
        <position position="602"/>
    </location>
    <ligand>
        <name>Na(+)</name>
        <dbReference type="ChEBI" id="CHEBI:29101"/>
    </ligand>
</feature>
<feature type="binding site" evidence="1">
    <location>
        <position position="605"/>
    </location>
    <ligand>
        <name>Na(+)</name>
        <dbReference type="ChEBI" id="CHEBI:29101"/>
    </ligand>
</feature>
<feature type="binding site" evidence="1">
    <location>
        <position position="605"/>
    </location>
    <ligand>
        <name>substrate</name>
    </ligand>
</feature>
<feature type="binding site" evidence="1">
    <location>
        <position position="1000"/>
    </location>
    <ligand>
        <name>substrate</name>
    </ligand>
</feature>
<feature type="site" description="Transition state stabilizer" evidence="1">
    <location>
        <position position="358"/>
    </location>
</feature>
<feature type="site" description="Transition state stabilizer" evidence="1">
    <location>
        <position position="392"/>
    </location>
</feature>
<keyword id="KW-0326">Glycosidase</keyword>
<keyword id="KW-0378">Hydrolase</keyword>
<keyword id="KW-0460">Magnesium</keyword>
<keyword id="KW-0479">Metal-binding</keyword>
<keyword id="KW-0915">Sodium</keyword>
<proteinExistence type="inferred from homology"/>
<sequence>MTMITDSLAVVLQRRDWENPGVTQLNRLAAHPPFASWRNSEEARTDRPSQQLRSLNGEWRFAWFPAPEAVPESWLECDLPDADTVVVPSNWQMHGYDAPIYTNVTYPITVNPPFVPAENPTGCYSLTFNIDESWLQEGQTRIIFDGVNSAFHLWCNGRWVGYGQDSRLPSEFDLSAFLRAGENRLAVMVLRWSDGSYLEDQDMWRMSGIFRDVSLLHKPTTQISDFQVTTRFNDDFSRAVLEAEVQMYGELRDELRVTVSLWQGETQVASGTAPFGGEIIDERGGYADRVTLRLNVENPELWSAEIPNLYRAVVELHTADGTLIEAEACDVGFREVRIENGLLLLNGKPLLIRGVNRHEHHPLHGQVMDEQTMVQDILLMKQNNFNAVRCSHYPNHPLWYTLCDRYGLYVVDEANIETHGMVPMNRLTDDPRWLPAMSERVTRMVQRDRNHPSVIIWSLGNESGHGANHDALYRWIKSVDPSRPVQYEGGGADTTATDIICPMYARVDEDQPFPAVPKWSIKKWLSLPGEMRPLILCEYAHAMGNSLGGFAKYWQAFRQYPRLQGGFVWDWVDQSLIKYDENGNPWSAYGGDFGDTPNDRQFCMNGLVFADRTPHPALTEAKHQQQFFQFRLSGRTIEVTSEYLFRHSDNEFLHWMVALDGKPLASGEVPLDVGPQGKQLIELPELPQPESAGQLWLTVRVVQPNATAWSEAGHISAWQQWRLAENLSVTLPSASHAIPQLTTSGTDFCIELGNKRWQFNRQSGFLSQMWIGDEKQLLTPLRDQFTRAPLDNDIGVSEATRIDPNAWVERWKAAGHYQAEAALLQCTADTLADAVLITTAHAWQHQGKTLFISRKTYRIDGHGEMVINVDVAVASDTPHPARVGLTCQLAQVAERVNWLGLGPQENYPDRLTAACFDRWDLPLSDMYTPYVFPSENGLRCGTRELNYGPHQWRGDFQFNISRYSQQQLMETSHRHLLHAEEGTWLNIDGFHMGIGGDDSWSPSVSAEFQLSAGHYHYQLVWCQK</sequence>
<dbReference type="EC" id="3.2.1.23" evidence="1"/>
<dbReference type="EMBL" id="CP000247">
    <property type="protein sequence ID" value="ABG68450.1"/>
    <property type="molecule type" value="Genomic_DNA"/>
</dbReference>
<dbReference type="RefSeq" id="WP_000177876.1">
    <property type="nucleotide sequence ID" value="NC_008253.1"/>
</dbReference>
<dbReference type="SMR" id="Q0TKT1"/>
<dbReference type="CAZy" id="GH2">
    <property type="family name" value="Glycoside Hydrolase Family 2"/>
</dbReference>
<dbReference type="KEGG" id="ecp:ECP_0417"/>
<dbReference type="HOGENOM" id="CLU_002346_0_2_6"/>
<dbReference type="Proteomes" id="UP000009182">
    <property type="component" value="Chromosome"/>
</dbReference>
<dbReference type="GO" id="GO:0009341">
    <property type="term" value="C:beta-galactosidase complex"/>
    <property type="evidence" value="ECO:0007669"/>
    <property type="project" value="InterPro"/>
</dbReference>
<dbReference type="GO" id="GO:0004565">
    <property type="term" value="F:beta-galactosidase activity"/>
    <property type="evidence" value="ECO:0007669"/>
    <property type="project" value="UniProtKB-EC"/>
</dbReference>
<dbReference type="GO" id="GO:0030246">
    <property type="term" value="F:carbohydrate binding"/>
    <property type="evidence" value="ECO:0007669"/>
    <property type="project" value="InterPro"/>
</dbReference>
<dbReference type="GO" id="GO:0000287">
    <property type="term" value="F:magnesium ion binding"/>
    <property type="evidence" value="ECO:0007669"/>
    <property type="project" value="UniProtKB-UniRule"/>
</dbReference>
<dbReference type="GO" id="GO:0005990">
    <property type="term" value="P:lactose catabolic process"/>
    <property type="evidence" value="ECO:0007669"/>
    <property type="project" value="TreeGrafter"/>
</dbReference>
<dbReference type="FunFam" id="2.60.120.260:FF:000058">
    <property type="entry name" value="Beta-galactosidase"/>
    <property type="match status" value="1"/>
</dbReference>
<dbReference type="FunFam" id="2.60.40.10:FF:000680">
    <property type="entry name" value="Beta-galactosidase"/>
    <property type="match status" value="1"/>
</dbReference>
<dbReference type="FunFam" id="2.60.40.10:FF:000850">
    <property type="entry name" value="Beta-galactosidase"/>
    <property type="match status" value="1"/>
</dbReference>
<dbReference type="FunFam" id="2.70.98.10:FF:000006">
    <property type="entry name" value="Beta-galactosidase"/>
    <property type="match status" value="1"/>
</dbReference>
<dbReference type="FunFam" id="3.20.20.80:FF:000018">
    <property type="entry name" value="Beta-galactosidase"/>
    <property type="match status" value="1"/>
</dbReference>
<dbReference type="Gene3D" id="2.70.98.10">
    <property type="match status" value="1"/>
</dbReference>
<dbReference type="Gene3D" id="2.60.120.260">
    <property type="entry name" value="Galactose-binding domain-like"/>
    <property type="match status" value="1"/>
</dbReference>
<dbReference type="Gene3D" id="3.20.20.80">
    <property type="entry name" value="Glycosidases"/>
    <property type="match status" value="1"/>
</dbReference>
<dbReference type="Gene3D" id="2.60.40.10">
    <property type="entry name" value="Immunoglobulins"/>
    <property type="match status" value="2"/>
</dbReference>
<dbReference type="HAMAP" id="MF_01687">
    <property type="entry name" value="Beta_gal"/>
    <property type="match status" value="1"/>
</dbReference>
<dbReference type="InterPro" id="IPR004199">
    <property type="entry name" value="B-gal_small/dom_5"/>
</dbReference>
<dbReference type="InterPro" id="IPR050347">
    <property type="entry name" value="Bact_Beta-galactosidase"/>
</dbReference>
<dbReference type="InterPro" id="IPR036156">
    <property type="entry name" value="Beta-gal/glucu_dom_sf"/>
</dbReference>
<dbReference type="InterPro" id="IPR011013">
    <property type="entry name" value="Gal_mutarotase_sf_dom"/>
</dbReference>
<dbReference type="InterPro" id="IPR008979">
    <property type="entry name" value="Galactose-bd-like_sf"/>
</dbReference>
<dbReference type="InterPro" id="IPR014718">
    <property type="entry name" value="GH-type_carb-bd"/>
</dbReference>
<dbReference type="InterPro" id="IPR006101">
    <property type="entry name" value="Glyco_hydro_2"/>
</dbReference>
<dbReference type="InterPro" id="IPR023232">
    <property type="entry name" value="Glyco_hydro_2_AS"/>
</dbReference>
<dbReference type="InterPro" id="IPR023933">
    <property type="entry name" value="Glyco_hydro_2_beta_Galsidase"/>
</dbReference>
<dbReference type="InterPro" id="IPR006103">
    <property type="entry name" value="Glyco_hydro_2_cat"/>
</dbReference>
<dbReference type="InterPro" id="IPR023230">
    <property type="entry name" value="Glyco_hydro_2_CS"/>
</dbReference>
<dbReference type="InterPro" id="IPR006102">
    <property type="entry name" value="Glyco_hydro_2_Ig-like"/>
</dbReference>
<dbReference type="InterPro" id="IPR006104">
    <property type="entry name" value="Glyco_hydro_2_N"/>
</dbReference>
<dbReference type="InterPro" id="IPR017853">
    <property type="entry name" value="Glycoside_hydrolase_SF"/>
</dbReference>
<dbReference type="InterPro" id="IPR013783">
    <property type="entry name" value="Ig-like_fold"/>
</dbReference>
<dbReference type="InterPro" id="IPR032312">
    <property type="entry name" value="LacZ_4"/>
</dbReference>
<dbReference type="NCBIfam" id="NF007074">
    <property type="entry name" value="PRK09525.1"/>
    <property type="match status" value="1"/>
</dbReference>
<dbReference type="PANTHER" id="PTHR46323">
    <property type="entry name" value="BETA-GALACTOSIDASE"/>
    <property type="match status" value="1"/>
</dbReference>
<dbReference type="PANTHER" id="PTHR46323:SF2">
    <property type="entry name" value="BETA-GALACTOSIDASE"/>
    <property type="match status" value="1"/>
</dbReference>
<dbReference type="Pfam" id="PF02929">
    <property type="entry name" value="Bgal_small_N"/>
    <property type="match status" value="1"/>
</dbReference>
<dbReference type="Pfam" id="PF00703">
    <property type="entry name" value="Glyco_hydro_2"/>
    <property type="match status" value="1"/>
</dbReference>
<dbReference type="Pfam" id="PF02836">
    <property type="entry name" value="Glyco_hydro_2_C"/>
    <property type="match status" value="1"/>
</dbReference>
<dbReference type="Pfam" id="PF02837">
    <property type="entry name" value="Glyco_hydro_2_N"/>
    <property type="match status" value="1"/>
</dbReference>
<dbReference type="Pfam" id="PF16353">
    <property type="entry name" value="LacZ_4"/>
    <property type="match status" value="1"/>
</dbReference>
<dbReference type="PRINTS" id="PR00132">
    <property type="entry name" value="GLHYDRLASE2"/>
</dbReference>
<dbReference type="SMART" id="SM01038">
    <property type="entry name" value="Bgal_small_N"/>
    <property type="match status" value="1"/>
</dbReference>
<dbReference type="SUPFAM" id="SSF51445">
    <property type="entry name" value="(Trans)glycosidases"/>
    <property type="match status" value="1"/>
</dbReference>
<dbReference type="SUPFAM" id="SSF49303">
    <property type="entry name" value="beta-Galactosidase/glucuronidase domain"/>
    <property type="match status" value="2"/>
</dbReference>
<dbReference type="SUPFAM" id="SSF74650">
    <property type="entry name" value="Galactose mutarotase-like"/>
    <property type="match status" value="1"/>
</dbReference>
<dbReference type="SUPFAM" id="SSF49785">
    <property type="entry name" value="Galactose-binding domain-like"/>
    <property type="match status" value="1"/>
</dbReference>
<dbReference type="PROSITE" id="PS00719">
    <property type="entry name" value="GLYCOSYL_HYDROL_F2_1"/>
    <property type="match status" value="1"/>
</dbReference>
<dbReference type="PROSITE" id="PS00608">
    <property type="entry name" value="GLYCOSYL_HYDROL_F2_2"/>
    <property type="match status" value="1"/>
</dbReference>
<accession>Q0TKT1</accession>
<evidence type="ECO:0000255" key="1">
    <source>
        <dbReference type="HAMAP-Rule" id="MF_01687"/>
    </source>
</evidence>
<gene>
    <name evidence="1" type="primary">lacZ</name>
    <name type="ordered locus">ECP_0417</name>
</gene>
<organism>
    <name type="scientific">Escherichia coli O6:K15:H31 (strain 536 / UPEC)</name>
    <dbReference type="NCBI Taxonomy" id="362663"/>
    <lineage>
        <taxon>Bacteria</taxon>
        <taxon>Pseudomonadati</taxon>
        <taxon>Pseudomonadota</taxon>
        <taxon>Gammaproteobacteria</taxon>
        <taxon>Enterobacterales</taxon>
        <taxon>Enterobacteriaceae</taxon>
        <taxon>Escherichia</taxon>
    </lineage>
</organism>
<name>BGAL_ECOL5</name>
<comment type="catalytic activity">
    <reaction evidence="1">
        <text>Hydrolysis of terminal non-reducing beta-D-galactose residues in beta-D-galactosides.</text>
        <dbReference type="EC" id="3.2.1.23"/>
    </reaction>
</comment>
<comment type="cofactor">
    <cofactor evidence="1">
        <name>Mg(2+)</name>
        <dbReference type="ChEBI" id="CHEBI:18420"/>
    </cofactor>
    <text evidence="1">Binds 2 magnesium ions per monomer.</text>
</comment>
<comment type="cofactor">
    <cofactor evidence="1">
        <name>Na(+)</name>
        <dbReference type="ChEBI" id="CHEBI:29101"/>
    </cofactor>
    <text evidence="1">Binds 1 sodium ion per monomer.</text>
</comment>
<comment type="subunit">
    <text evidence="1">Homotetramer.</text>
</comment>
<comment type="similarity">
    <text evidence="1">Belongs to the glycosyl hydrolase 2 family.</text>
</comment>
<reference key="1">
    <citation type="journal article" date="2006" name="Mol. Microbiol.">
        <title>Role of pathogenicity island-associated integrases in the genome plasticity of uropathogenic Escherichia coli strain 536.</title>
        <authorList>
            <person name="Hochhut B."/>
            <person name="Wilde C."/>
            <person name="Balling G."/>
            <person name="Middendorf B."/>
            <person name="Dobrindt U."/>
            <person name="Brzuszkiewicz E."/>
            <person name="Gottschalk G."/>
            <person name="Carniel E."/>
            <person name="Hacker J."/>
        </authorList>
    </citation>
    <scope>NUCLEOTIDE SEQUENCE [LARGE SCALE GENOMIC DNA]</scope>
    <source>
        <strain>536 / UPEC</strain>
    </source>
</reference>
<protein>
    <recommendedName>
        <fullName evidence="1">Beta-galactosidase</fullName>
        <shortName evidence="1">Beta-gal</shortName>
        <ecNumber evidence="1">3.2.1.23</ecNumber>
    </recommendedName>
    <alternativeName>
        <fullName evidence="1">Lactase</fullName>
    </alternativeName>
</protein>